<accession>Q7U8Q6</accession>
<keyword id="KW-0963">Cytoplasm</keyword>
<keyword id="KW-0441">Lipid A biosynthesis</keyword>
<keyword id="KW-0444">Lipid biosynthesis</keyword>
<keyword id="KW-0443">Lipid metabolism</keyword>
<keyword id="KW-0456">Lyase</keyword>
<reference key="1">
    <citation type="journal article" date="2003" name="Nature">
        <title>The genome of a motile marine Synechococcus.</title>
        <authorList>
            <person name="Palenik B."/>
            <person name="Brahamsha B."/>
            <person name="Larimer F.W."/>
            <person name="Land M.L."/>
            <person name="Hauser L."/>
            <person name="Chain P."/>
            <person name="Lamerdin J.E."/>
            <person name="Regala W."/>
            <person name="Allen E.E."/>
            <person name="McCarren J."/>
            <person name="Paulsen I.T."/>
            <person name="Dufresne A."/>
            <person name="Partensky F."/>
            <person name="Webb E.A."/>
            <person name="Waterbury J."/>
        </authorList>
    </citation>
    <scope>NUCLEOTIDE SEQUENCE [LARGE SCALE GENOMIC DNA]</scope>
    <source>
        <strain>WH8102</strain>
    </source>
</reference>
<gene>
    <name evidence="1" type="primary">fabZ</name>
    <name type="ordered locus">SYNW0557</name>
</gene>
<name>FABZ_PARMW</name>
<dbReference type="EC" id="4.2.1.59" evidence="1"/>
<dbReference type="EMBL" id="BX569690">
    <property type="protein sequence ID" value="CAE07072.1"/>
    <property type="molecule type" value="Genomic_DNA"/>
</dbReference>
<dbReference type="RefSeq" id="WP_011127426.1">
    <property type="nucleotide sequence ID" value="NC_005070.1"/>
</dbReference>
<dbReference type="SMR" id="Q7U8Q6"/>
<dbReference type="STRING" id="84588.SYNW0557"/>
<dbReference type="KEGG" id="syw:SYNW0557"/>
<dbReference type="eggNOG" id="COG0764">
    <property type="taxonomic scope" value="Bacteria"/>
</dbReference>
<dbReference type="HOGENOM" id="CLU_078912_1_1_3"/>
<dbReference type="Proteomes" id="UP000001422">
    <property type="component" value="Chromosome"/>
</dbReference>
<dbReference type="GO" id="GO:0005737">
    <property type="term" value="C:cytoplasm"/>
    <property type="evidence" value="ECO:0007669"/>
    <property type="project" value="UniProtKB-SubCell"/>
</dbReference>
<dbReference type="GO" id="GO:0016020">
    <property type="term" value="C:membrane"/>
    <property type="evidence" value="ECO:0007669"/>
    <property type="project" value="GOC"/>
</dbReference>
<dbReference type="GO" id="GO:0019171">
    <property type="term" value="F:(3R)-hydroxyacyl-[acyl-carrier-protein] dehydratase activity"/>
    <property type="evidence" value="ECO:0007669"/>
    <property type="project" value="UniProtKB-EC"/>
</dbReference>
<dbReference type="GO" id="GO:0006633">
    <property type="term" value="P:fatty acid biosynthetic process"/>
    <property type="evidence" value="ECO:0007669"/>
    <property type="project" value="UniProtKB-UniRule"/>
</dbReference>
<dbReference type="GO" id="GO:0009245">
    <property type="term" value="P:lipid A biosynthetic process"/>
    <property type="evidence" value="ECO:0007669"/>
    <property type="project" value="UniProtKB-UniRule"/>
</dbReference>
<dbReference type="CDD" id="cd01288">
    <property type="entry name" value="FabZ"/>
    <property type="match status" value="1"/>
</dbReference>
<dbReference type="FunFam" id="3.10.129.10:FF:000001">
    <property type="entry name" value="3-hydroxyacyl-[acyl-carrier-protein] dehydratase FabZ"/>
    <property type="match status" value="1"/>
</dbReference>
<dbReference type="Gene3D" id="3.10.129.10">
    <property type="entry name" value="Hotdog Thioesterase"/>
    <property type="match status" value="1"/>
</dbReference>
<dbReference type="HAMAP" id="MF_00406">
    <property type="entry name" value="FabZ"/>
    <property type="match status" value="1"/>
</dbReference>
<dbReference type="InterPro" id="IPR013114">
    <property type="entry name" value="FabA_FabZ"/>
</dbReference>
<dbReference type="InterPro" id="IPR010084">
    <property type="entry name" value="FabZ"/>
</dbReference>
<dbReference type="InterPro" id="IPR029069">
    <property type="entry name" value="HotDog_dom_sf"/>
</dbReference>
<dbReference type="NCBIfam" id="TIGR01750">
    <property type="entry name" value="fabZ"/>
    <property type="match status" value="1"/>
</dbReference>
<dbReference type="NCBIfam" id="NF000582">
    <property type="entry name" value="PRK00006.1"/>
    <property type="match status" value="1"/>
</dbReference>
<dbReference type="PANTHER" id="PTHR30272">
    <property type="entry name" value="3-HYDROXYACYL-[ACYL-CARRIER-PROTEIN] DEHYDRATASE"/>
    <property type="match status" value="1"/>
</dbReference>
<dbReference type="PANTHER" id="PTHR30272:SF1">
    <property type="entry name" value="3-HYDROXYACYL-[ACYL-CARRIER-PROTEIN] DEHYDRATASE"/>
    <property type="match status" value="1"/>
</dbReference>
<dbReference type="Pfam" id="PF07977">
    <property type="entry name" value="FabA"/>
    <property type="match status" value="1"/>
</dbReference>
<dbReference type="SUPFAM" id="SSF54637">
    <property type="entry name" value="Thioesterase/thiol ester dehydrase-isomerase"/>
    <property type="match status" value="1"/>
</dbReference>
<sequence>MTDSPASDAAQSSVVLTSEQIAGLLPHRYPFALVDRVIAHEPGVSATGIKNVTVNEPQFQGHFPGRPLMPGVLIVEAMAQVGGLIVTQMPDLPKGLFVFAGIDGVRFRRPVVPGDQLVIHCELLSLKRKRFGKVKAEAKVDGELVCSGELMFSLVD</sequence>
<feature type="chain" id="PRO_0000091752" description="3-hydroxyacyl-[acyl-carrier-protein] dehydratase FabZ">
    <location>
        <begin position="1"/>
        <end position="156"/>
    </location>
</feature>
<feature type="active site" evidence="1">
    <location>
        <position position="62"/>
    </location>
</feature>
<comment type="function">
    <text evidence="1">Involved in unsaturated fatty acids biosynthesis. Catalyzes the dehydration of short chain beta-hydroxyacyl-ACPs and long chain saturated and unsaturated beta-hydroxyacyl-ACPs.</text>
</comment>
<comment type="catalytic activity">
    <reaction evidence="1">
        <text>a (3R)-hydroxyacyl-[ACP] = a (2E)-enoyl-[ACP] + H2O</text>
        <dbReference type="Rhea" id="RHEA:13097"/>
        <dbReference type="Rhea" id="RHEA-COMP:9925"/>
        <dbReference type="Rhea" id="RHEA-COMP:9945"/>
        <dbReference type="ChEBI" id="CHEBI:15377"/>
        <dbReference type="ChEBI" id="CHEBI:78784"/>
        <dbReference type="ChEBI" id="CHEBI:78827"/>
        <dbReference type="EC" id="4.2.1.59"/>
    </reaction>
</comment>
<comment type="subcellular location">
    <subcellularLocation>
        <location evidence="1">Cytoplasm</location>
    </subcellularLocation>
</comment>
<comment type="similarity">
    <text evidence="1">Belongs to the thioester dehydratase family. FabZ subfamily.</text>
</comment>
<organism>
    <name type="scientific">Parasynechococcus marenigrum (strain WH8102)</name>
    <dbReference type="NCBI Taxonomy" id="84588"/>
    <lineage>
        <taxon>Bacteria</taxon>
        <taxon>Bacillati</taxon>
        <taxon>Cyanobacteriota</taxon>
        <taxon>Cyanophyceae</taxon>
        <taxon>Synechococcales</taxon>
        <taxon>Prochlorococcaceae</taxon>
        <taxon>Parasynechococcus</taxon>
        <taxon>Parasynechococcus marenigrum</taxon>
    </lineage>
</organism>
<protein>
    <recommendedName>
        <fullName evidence="1">3-hydroxyacyl-[acyl-carrier-protein] dehydratase FabZ</fullName>
        <ecNumber evidence="1">4.2.1.59</ecNumber>
    </recommendedName>
    <alternativeName>
        <fullName evidence="1">(3R)-hydroxymyristoyl-[acyl-carrier-protein] dehydratase</fullName>
        <shortName evidence="1">(3R)-hydroxymyristoyl-ACP dehydrase</shortName>
    </alternativeName>
    <alternativeName>
        <fullName evidence="1">Beta-hydroxyacyl-ACP dehydratase</fullName>
    </alternativeName>
</protein>
<proteinExistence type="inferred from homology"/>
<evidence type="ECO:0000255" key="1">
    <source>
        <dbReference type="HAMAP-Rule" id="MF_00406"/>
    </source>
</evidence>